<keyword id="KW-0001">2Fe-2S</keyword>
<keyword id="KW-0004">4Fe-4S</keyword>
<keyword id="KW-0093">Biotin biosynthesis</keyword>
<keyword id="KW-0408">Iron</keyword>
<keyword id="KW-0411">Iron-sulfur</keyword>
<keyword id="KW-0479">Metal-binding</keyword>
<keyword id="KW-0949">S-adenosyl-L-methionine</keyword>
<keyword id="KW-0808">Transferase</keyword>
<organism>
    <name type="scientific">Escherichia coli (strain SMS-3-5 / SECEC)</name>
    <dbReference type="NCBI Taxonomy" id="439855"/>
    <lineage>
        <taxon>Bacteria</taxon>
        <taxon>Pseudomonadati</taxon>
        <taxon>Pseudomonadota</taxon>
        <taxon>Gammaproteobacteria</taxon>
        <taxon>Enterobacterales</taxon>
        <taxon>Enterobacteriaceae</taxon>
        <taxon>Escherichia</taxon>
    </lineage>
</organism>
<accession>B1LM66</accession>
<name>BIOB_ECOSM</name>
<evidence type="ECO:0000255" key="1">
    <source>
        <dbReference type="HAMAP-Rule" id="MF_01694"/>
    </source>
</evidence>
<evidence type="ECO:0000255" key="2">
    <source>
        <dbReference type="PROSITE-ProRule" id="PRU01266"/>
    </source>
</evidence>
<dbReference type="EC" id="2.8.1.6" evidence="1"/>
<dbReference type="EMBL" id="CP000970">
    <property type="protein sequence ID" value="ACB16547.1"/>
    <property type="molecule type" value="Genomic_DNA"/>
</dbReference>
<dbReference type="RefSeq" id="WP_000951213.1">
    <property type="nucleotide sequence ID" value="NC_010498.1"/>
</dbReference>
<dbReference type="SMR" id="B1LM66"/>
<dbReference type="GeneID" id="93776655"/>
<dbReference type="KEGG" id="ecm:EcSMS35_0798"/>
<dbReference type="HOGENOM" id="CLU_033172_1_2_6"/>
<dbReference type="UniPathway" id="UPA00078">
    <property type="reaction ID" value="UER00162"/>
</dbReference>
<dbReference type="Proteomes" id="UP000007011">
    <property type="component" value="Chromosome"/>
</dbReference>
<dbReference type="GO" id="GO:0051537">
    <property type="term" value="F:2 iron, 2 sulfur cluster binding"/>
    <property type="evidence" value="ECO:0007669"/>
    <property type="project" value="UniProtKB-KW"/>
</dbReference>
<dbReference type="GO" id="GO:0051539">
    <property type="term" value="F:4 iron, 4 sulfur cluster binding"/>
    <property type="evidence" value="ECO:0007669"/>
    <property type="project" value="UniProtKB-KW"/>
</dbReference>
<dbReference type="GO" id="GO:0004076">
    <property type="term" value="F:biotin synthase activity"/>
    <property type="evidence" value="ECO:0007669"/>
    <property type="project" value="UniProtKB-UniRule"/>
</dbReference>
<dbReference type="GO" id="GO:0005506">
    <property type="term" value="F:iron ion binding"/>
    <property type="evidence" value="ECO:0007669"/>
    <property type="project" value="UniProtKB-UniRule"/>
</dbReference>
<dbReference type="GO" id="GO:0009102">
    <property type="term" value="P:biotin biosynthetic process"/>
    <property type="evidence" value="ECO:0007669"/>
    <property type="project" value="UniProtKB-UniRule"/>
</dbReference>
<dbReference type="CDD" id="cd01335">
    <property type="entry name" value="Radical_SAM"/>
    <property type="match status" value="1"/>
</dbReference>
<dbReference type="FunFam" id="3.20.20.70:FF:000011">
    <property type="entry name" value="Biotin synthase"/>
    <property type="match status" value="1"/>
</dbReference>
<dbReference type="Gene3D" id="3.20.20.70">
    <property type="entry name" value="Aldolase class I"/>
    <property type="match status" value="1"/>
</dbReference>
<dbReference type="HAMAP" id="MF_01694">
    <property type="entry name" value="BioB"/>
    <property type="match status" value="1"/>
</dbReference>
<dbReference type="InterPro" id="IPR013785">
    <property type="entry name" value="Aldolase_TIM"/>
</dbReference>
<dbReference type="InterPro" id="IPR010722">
    <property type="entry name" value="BATS_dom"/>
</dbReference>
<dbReference type="InterPro" id="IPR002684">
    <property type="entry name" value="Biotin_synth/BioAB"/>
</dbReference>
<dbReference type="InterPro" id="IPR024177">
    <property type="entry name" value="Biotin_synthase"/>
</dbReference>
<dbReference type="InterPro" id="IPR006638">
    <property type="entry name" value="Elp3/MiaA/NifB-like_rSAM"/>
</dbReference>
<dbReference type="InterPro" id="IPR007197">
    <property type="entry name" value="rSAM"/>
</dbReference>
<dbReference type="NCBIfam" id="TIGR00433">
    <property type="entry name" value="bioB"/>
    <property type="match status" value="1"/>
</dbReference>
<dbReference type="PANTHER" id="PTHR22976">
    <property type="entry name" value="BIOTIN SYNTHASE"/>
    <property type="match status" value="1"/>
</dbReference>
<dbReference type="PANTHER" id="PTHR22976:SF2">
    <property type="entry name" value="BIOTIN SYNTHASE, MITOCHONDRIAL"/>
    <property type="match status" value="1"/>
</dbReference>
<dbReference type="Pfam" id="PF06968">
    <property type="entry name" value="BATS"/>
    <property type="match status" value="1"/>
</dbReference>
<dbReference type="Pfam" id="PF04055">
    <property type="entry name" value="Radical_SAM"/>
    <property type="match status" value="1"/>
</dbReference>
<dbReference type="PIRSF" id="PIRSF001619">
    <property type="entry name" value="Biotin_synth"/>
    <property type="match status" value="1"/>
</dbReference>
<dbReference type="SFLD" id="SFLDG01060">
    <property type="entry name" value="BATS_domain_containing"/>
    <property type="match status" value="1"/>
</dbReference>
<dbReference type="SFLD" id="SFLDF00272">
    <property type="entry name" value="biotin_synthase"/>
    <property type="match status" value="1"/>
</dbReference>
<dbReference type="SMART" id="SM00876">
    <property type="entry name" value="BATS"/>
    <property type="match status" value="1"/>
</dbReference>
<dbReference type="SMART" id="SM00729">
    <property type="entry name" value="Elp3"/>
    <property type="match status" value="1"/>
</dbReference>
<dbReference type="SUPFAM" id="SSF102114">
    <property type="entry name" value="Radical SAM enzymes"/>
    <property type="match status" value="1"/>
</dbReference>
<dbReference type="PROSITE" id="PS51918">
    <property type="entry name" value="RADICAL_SAM"/>
    <property type="match status" value="1"/>
</dbReference>
<comment type="function">
    <text evidence="1">Catalyzes the conversion of dethiobiotin (DTB) to biotin by the insertion of a sulfur atom into dethiobiotin via a radical-based mechanism.</text>
</comment>
<comment type="catalytic activity">
    <reaction evidence="1">
        <text>(4R,5S)-dethiobiotin + (sulfur carrier)-SH + 2 reduced [2Fe-2S]-[ferredoxin] + 2 S-adenosyl-L-methionine = (sulfur carrier)-H + biotin + 2 5'-deoxyadenosine + 2 L-methionine + 2 oxidized [2Fe-2S]-[ferredoxin]</text>
        <dbReference type="Rhea" id="RHEA:22060"/>
        <dbReference type="Rhea" id="RHEA-COMP:10000"/>
        <dbReference type="Rhea" id="RHEA-COMP:10001"/>
        <dbReference type="Rhea" id="RHEA-COMP:14737"/>
        <dbReference type="Rhea" id="RHEA-COMP:14739"/>
        <dbReference type="ChEBI" id="CHEBI:17319"/>
        <dbReference type="ChEBI" id="CHEBI:29917"/>
        <dbReference type="ChEBI" id="CHEBI:33737"/>
        <dbReference type="ChEBI" id="CHEBI:33738"/>
        <dbReference type="ChEBI" id="CHEBI:57586"/>
        <dbReference type="ChEBI" id="CHEBI:57844"/>
        <dbReference type="ChEBI" id="CHEBI:59789"/>
        <dbReference type="ChEBI" id="CHEBI:64428"/>
        <dbReference type="ChEBI" id="CHEBI:149473"/>
        <dbReference type="EC" id="2.8.1.6"/>
    </reaction>
</comment>
<comment type="cofactor">
    <cofactor evidence="1">
        <name>[4Fe-4S] cluster</name>
        <dbReference type="ChEBI" id="CHEBI:49883"/>
    </cofactor>
    <text evidence="1">Binds 1 [4Fe-4S] cluster. The cluster is coordinated with 3 cysteines and an exchangeable S-adenosyl-L-methionine.</text>
</comment>
<comment type="cofactor">
    <cofactor evidence="1">
        <name>[2Fe-2S] cluster</name>
        <dbReference type="ChEBI" id="CHEBI:190135"/>
    </cofactor>
    <text evidence="1">Binds 1 [2Fe-2S] cluster. The cluster is coordinated with 3 cysteines and 1 arginine.</text>
</comment>
<comment type="pathway">
    <text evidence="1">Cofactor biosynthesis; biotin biosynthesis; biotin from 7,8-diaminononanoate: step 2/2.</text>
</comment>
<comment type="subunit">
    <text evidence="1">Homodimer.</text>
</comment>
<comment type="similarity">
    <text evidence="1">Belongs to the radical SAM superfamily. Biotin synthase family.</text>
</comment>
<reference key="1">
    <citation type="journal article" date="2008" name="J. Bacteriol.">
        <title>Insights into the environmental resistance gene pool from the genome sequence of the multidrug-resistant environmental isolate Escherichia coli SMS-3-5.</title>
        <authorList>
            <person name="Fricke W.F."/>
            <person name="Wright M.S."/>
            <person name="Lindell A.H."/>
            <person name="Harkins D.M."/>
            <person name="Baker-Austin C."/>
            <person name="Ravel J."/>
            <person name="Stepanauskas R."/>
        </authorList>
    </citation>
    <scope>NUCLEOTIDE SEQUENCE [LARGE SCALE GENOMIC DNA]</scope>
    <source>
        <strain>SMS-3-5 / SECEC</strain>
    </source>
</reference>
<sequence length="346" mass="38648">MAHRPRWTLSQVTELFEKPLLDLLFEAQQVHRQHFDPRQVQVSTLLSIKTGACPEDCKYCPQSSRYKTGLEAERLMEVEQVLESARKAKAAGSTRFCMGAAWKNPHERDMPYLEQMVQGVKAMGLEACMTLGTLSESQAQRLANAGLDYYNHNLDTSPEFYGNIITTRTYQERLDTLEKVRDAGIKVCSGGIVGLGETVKDRAGLLLQLANLPTPPESVPINMLVKVKGTPLADNDDVDAFDFIRTIAVARIMMPTSYVRLSAGREQMNEQTQAMCFMAGANSIFYGCKLLTTPNPEEDKDLQLFRKLGLNPQQTAVLAGDNEQQQRLEQALMTPDTDEYYNAAAL</sequence>
<protein>
    <recommendedName>
        <fullName evidence="1">Biotin synthase</fullName>
        <ecNumber evidence="1">2.8.1.6</ecNumber>
    </recommendedName>
</protein>
<proteinExistence type="inferred from homology"/>
<feature type="chain" id="PRO_0000381372" description="Biotin synthase">
    <location>
        <begin position="1"/>
        <end position="346"/>
    </location>
</feature>
<feature type="domain" description="Radical SAM core" evidence="2">
    <location>
        <begin position="38"/>
        <end position="256"/>
    </location>
</feature>
<feature type="binding site" evidence="1">
    <location>
        <position position="53"/>
    </location>
    <ligand>
        <name>[4Fe-4S] cluster</name>
        <dbReference type="ChEBI" id="CHEBI:49883"/>
        <note>4Fe-4S-S-AdoMet</note>
    </ligand>
</feature>
<feature type="binding site" evidence="1">
    <location>
        <position position="57"/>
    </location>
    <ligand>
        <name>[4Fe-4S] cluster</name>
        <dbReference type="ChEBI" id="CHEBI:49883"/>
        <note>4Fe-4S-S-AdoMet</note>
    </ligand>
</feature>
<feature type="binding site" evidence="1">
    <location>
        <position position="60"/>
    </location>
    <ligand>
        <name>[4Fe-4S] cluster</name>
        <dbReference type="ChEBI" id="CHEBI:49883"/>
        <note>4Fe-4S-S-AdoMet</note>
    </ligand>
</feature>
<feature type="binding site" evidence="1">
    <location>
        <position position="97"/>
    </location>
    <ligand>
        <name>[2Fe-2S] cluster</name>
        <dbReference type="ChEBI" id="CHEBI:190135"/>
    </ligand>
</feature>
<feature type="binding site" evidence="1">
    <location>
        <position position="128"/>
    </location>
    <ligand>
        <name>[2Fe-2S] cluster</name>
        <dbReference type="ChEBI" id="CHEBI:190135"/>
    </ligand>
</feature>
<feature type="binding site" evidence="1">
    <location>
        <position position="188"/>
    </location>
    <ligand>
        <name>[2Fe-2S] cluster</name>
        <dbReference type="ChEBI" id="CHEBI:190135"/>
    </ligand>
</feature>
<feature type="binding site" evidence="1">
    <location>
        <position position="260"/>
    </location>
    <ligand>
        <name>[2Fe-2S] cluster</name>
        <dbReference type="ChEBI" id="CHEBI:190135"/>
    </ligand>
</feature>
<gene>
    <name evidence="1" type="primary">bioB</name>
    <name type="ordered locus">EcSMS35_0798</name>
</gene>